<comment type="catalytic activity">
    <reaction evidence="1">
        <text>tRNA(Gln) + L-glutamine + ATP = L-glutaminyl-tRNA(Gln) + AMP + diphosphate</text>
        <dbReference type="Rhea" id="RHEA:20121"/>
        <dbReference type="Rhea" id="RHEA-COMP:9662"/>
        <dbReference type="Rhea" id="RHEA-COMP:9681"/>
        <dbReference type="ChEBI" id="CHEBI:30616"/>
        <dbReference type="ChEBI" id="CHEBI:33019"/>
        <dbReference type="ChEBI" id="CHEBI:58359"/>
        <dbReference type="ChEBI" id="CHEBI:78442"/>
        <dbReference type="ChEBI" id="CHEBI:78521"/>
        <dbReference type="ChEBI" id="CHEBI:456215"/>
        <dbReference type="EC" id="6.1.1.18"/>
    </reaction>
</comment>
<comment type="subunit">
    <text evidence="1">Monomer.</text>
</comment>
<comment type="subcellular location">
    <subcellularLocation>
        <location evidence="1">Cytoplasm</location>
    </subcellularLocation>
</comment>
<comment type="similarity">
    <text evidence="1">Belongs to the class-I aminoacyl-tRNA synthetase family.</text>
</comment>
<reference key="1">
    <citation type="journal article" date="2006" name="Genome Biol.">
        <title>Genomic analysis reveals that Pseudomonas aeruginosa virulence is combinatorial.</title>
        <authorList>
            <person name="Lee D.G."/>
            <person name="Urbach J.M."/>
            <person name="Wu G."/>
            <person name="Liberati N.T."/>
            <person name="Feinbaum R.L."/>
            <person name="Miyata S."/>
            <person name="Diggins L.T."/>
            <person name="He J."/>
            <person name="Saucier M."/>
            <person name="Deziel E."/>
            <person name="Friedman L."/>
            <person name="Li L."/>
            <person name="Grills G."/>
            <person name="Montgomery K."/>
            <person name="Kucherlapati R."/>
            <person name="Rahme L.G."/>
            <person name="Ausubel F.M."/>
        </authorList>
    </citation>
    <scope>NUCLEOTIDE SEQUENCE [LARGE SCALE GENOMIC DNA]</scope>
    <source>
        <strain>UCBPP-PA14</strain>
    </source>
</reference>
<feature type="chain" id="PRO_1000095500" description="Glutamine--tRNA ligase">
    <location>
        <begin position="1"/>
        <end position="556"/>
    </location>
</feature>
<feature type="short sequence motif" description="'HIGH' region" evidence="1">
    <location>
        <begin position="35"/>
        <end position="45"/>
    </location>
</feature>
<feature type="short sequence motif" description="'KMSKS' region" evidence="1">
    <location>
        <begin position="269"/>
        <end position="273"/>
    </location>
</feature>
<feature type="binding site" evidence="1">
    <location>
        <begin position="36"/>
        <end position="38"/>
    </location>
    <ligand>
        <name>ATP</name>
        <dbReference type="ChEBI" id="CHEBI:30616"/>
    </ligand>
</feature>
<feature type="binding site" evidence="1">
    <location>
        <begin position="42"/>
        <end position="48"/>
    </location>
    <ligand>
        <name>ATP</name>
        <dbReference type="ChEBI" id="CHEBI:30616"/>
    </ligand>
</feature>
<feature type="binding site" evidence="1">
    <location>
        <position position="68"/>
    </location>
    <ligand>
        <name>L-glutamine</name>
        <dbReference type="ChEBI" id="CHEBI:58359"/>
    </ligand>
</feature>
<feature type="binding site" evidence="1">
    <location>
        <position position="213"/>
    </location>
    <ligand>
        <name>L-glutamine</name>
        <dbReference type="ChEBI" id="CHEBI:58359"/>
    </ligand>
</feature>
<feature type="binding site" evidence="1">
    <location>
        <position position="232"/>
    </location>
    <ligand>
        <name>ATP</name>
        <dbReference type="ChEBI" id="CHEBI:30616"/>
    </ligand>
</feature>
<feature type="binding site" evidence="1">
    <location>
        <begin position="262"/>
        <end position="263"/>
    </location>
    <ligand>
        <name>ATP</name>
        <dbReference type="ChEBI" id="CHEBI:30616"/>
    </ligand>
</feature>
<name>SYQ_PSEAB</name>
<accession>Q02KT5</accession>
<evidence type="ECO:0000255" key="1">
    <source>
        <dbReference type="HAMAP-Rule" id="MF_00126"/>
    </source>
</evidence>
<sequence length="556" mass="62957">MSKPETTAAPNFLRQIVQADLDAGKHAKIVTRFPPEPNGYLHIGHAKSICLNFGLAQEFAGDCHLRFDDTNPAKEDQEYIDAIEADIKWLGFQWSGEVCYASNYFDQLHAWAIELIKAGKAFVCDLGPEEMREYRGTLTEPGRNSPYRDRSVEENLDLFARMKAGEFPDGARSLRAKIDMGSPNMNLRDPILYRIRHAHHHQTGDKWCIYPSYDFTHGQSDAIEGITHSICTLEFEDHRPLYEWFLANLPVPAQPRQYEFSRLNLNYTVTSKRKLKQLVDEGHVSGWDDPRMSTLSGYRRRGYTPESIRNFCEMIGVNRASGVVDIGMLEFSIRDHLDATAPRAMCVLKPLKVVITNYPEGQVENLELPRHPKEDMGVRVLPFGRELFIDAGDFEEVPPAGYKRLIPGGEVRLRGSYVIRADEAIKDADGNIVELRCSYDPDTLGKNPEGRKVKGVIHWVPAEGSVECEVRLYDRLFRSANPEKAEEGGSFLDNINADSLQVLTGCRAEPSLGQANPEDRFQFEREGYFVADLKDSRPGKPVFNRTVTLRDSWGQG</sequence>
<protein>
    <recommendedName>
        <fullName evidence="1">Glutamine--tRNA ligase</fullName>
        <ecNumber evidence="1">6.1.1.18</ecNumber>
    </recommendedName>
    <alternativeName>
        <fullName evidence="1">Glutaminyl-tRNA synthetase</fullName>
        <shortName evidence="1">GlnRS</shortName>
    </alternativeName>
</protein>
<gene>
    <name evidence="1" type="primary">glnS</name>
    <name type="ordered locus">PA14_41380</name>
</gene>
<proteinExistence type="inferred from homology"/>
<dbReference type="EC" id="6.1.1.18" evidence="1"/>
<dbReference type="EMBL" id="CP000438">
    <property type="protein sequence ID" value="ABJ10978.1"/>
    <property type="molecule type" value="Genomic_DNA"/>
</dbReference>
<dbReference type="RefSeq" id="WP_003139945.1">
    <property type="nucleotide sequence ID" value="NZ_CP034244.1"/>
</dbReference>
<dbReference type="SMR" id="Q02KT5"/>
<dbReference type="KEGG" id="pau:PA14_41380"/>
<dbReference type="PseudoCAP" id="PA14_41380"/>
<dbReference type="HOGENOM" id="CLU_001882_2_3_6"/>
<dbReference type="BioCyc" id="PAER208963:G1G74-3466-MONOMER"/>
<dbReference type="Proteomes" id="UP000000653">
    <property type="component" value="Chromosome"/>
</dbReference>
<dbReference type="GO" id="GO:0005829">
    <property type="term" value="C:cytosol"/>
    <property type="evidence" value="ECO:0007669"/>
    <property type="project" value="TreeGrafter"/>
</dbReference>
<dbReference type="GO" id="GO:0005524">
    <property type="term" value="F:ATP binding"/>
    <property type="evidence" value="ECO:0007669"/>
    <property type="project" value="UniProtKB-UniRule"/>
</dbReference>
<dbReference type="GO" id="GO:0004819">
    <property type="term" value="F:glutamine-tRNA ligase activity"/>
    <property type="evidence" value="ECO:0007669"/>
    <property type="project" value="UniProtKB-UniRule"/>
</dbReference>
<dbReference type="GO" id="GO:0006425">
    <property type="term" value="P:glutaminyl-tRNA aminoacylation"/>
    <property type="evidence" value="ECO:0007669"/>
    <property type="project" value="InterPro"/>
</dbReference>
<dbReference type="GO" id="GO:0006424">
    <property type="term" value="P:glutamyl-tRNA aminoacylation"/>
    <property type="evidence" value="ECO:0007669"/>
    <property type="project" value="UniProtKB-UniRule"/>
</dbReference>
<dbReference type="CDD" id="cd00807">
    <property type="entry name" value="GlnRS_core"/>
    <property type="match status" value="1"/>
</dbReference>
<dbReference type="FunFam" id="1.10.1160.10:FF:000001">
    <property type="entry name" value="Glutamine--tRNA ligase"/>
    <property type="match status" value="1"/>
</dbReference>
<dbReference type="FunFam" id="2.40.240.10:FF:000001">
    <property type="entry name" value="Glutamine--tRNA ligase"/>
    <property type="match status" value="1"/>
</dbReference>
<dbReference type="FunFam" id="3.90.800.10:FF:000001">
    <property type="entry name" value="Glutamine--tRNA ligase"/>
    <property type="match status" value="1"/>
</dbReference>
<dbReference type="FunFam" id="3.40.50.620:FF:000037">
    <property type="entry name" value="Glutamine--tRNA ligase cytoplasmic"/>
    <property type="match status" value="1"/>
</dbReference>
<dbReference type="Gene3D" id="1.10.1160.10">
    <property type="entry name" value="Glutamyl-trna Synthetase, Domain 2"/>
    <property type="match status" value="1"/>
</dbReference>
<dbReference type="Gene3D" id="3.90.800.10">
    <property type="entry name" value="Glutamyl-tRNA Synthetase, Domain 3"/>
    <property type="match status" value="1"/>
</dbReference>
<dbReference type="Gene3D" id="3.40.50.620">
    <property type="entry name" value="HUPs"/>
    <property type="match status" value="1"/>
</dbReference>
<dbReference type="Gene3D" id="2.40.240.10">
    <property type="entry name" value="Ribosomal Protein L25, Chain P"/>
    <property type="match status" value="2"/>
</dbReference>
<dbReference type="HAMAP" id="MF_00126">
    <property type="entry name" value="Gln_tRNA_synth"/>
    <property type="match status" value="1"/>
</dbReference>
<dbReference type="InterPro" id="IPR001412">
    <property type="entry name" value="aa-tRNA-synth_I_CS"/>
</dbReference>
<dbReference type="InterPro" id="IPR004514">
    <property type="entry name" value="Gln-tRNA-synth"/>
</dbReference>
<dbReference type="InterPro" id="IPR050132">
    <property type="entry name" value="Gln/Glu-tRNA_Ligase"/>
</dbReference>
<dbReference type="InterPro" id="IPR022861">
    <property type="entry name" value="Gln_tRNA_ligase_bac"/>
</dbReference>
<dbReference type="InterPro" id="IPR000924">
    <property type="entry name" value="Glu/Gln-tRNA-synth"/>
</dbReference>
<dbReference type="InterPro" id="IPR020058">
    <property type="entry name" value="Glu/Gln-tRNA-synth_Ib_cat-dom"/>
</dbReference>
<dbReference type="InterPro" id="IPR020059">
    <property type="entry name" value="Glu/Gln-tRNA-synth_Ib_codon-bd"/>
</dbReference>
<dbReference type="InterPro" id="IPR020061">
    <property type="entry name" value="Glu_tRNA_lig_a-bdl"/>
</dbReference>
<dbReference type="InterPro" id="IPR020056">
    <property type="entry name" value="Rbsml_bL25/Gln-tRNA_synth_N"/>
</dbReference>
<dbReference type="InterPro" id="IPR011035">
    <property type="entry name" value="Ribosomal_bL25/Gln-tRNA_synth"/>
</dbReference>
<dbReference type="InterPro" id="IPR014729">
    <property type="entry name" value="Rossmann-like_a/b/a_fold"/>
</dbReference>
<dbReference type="InterPro" id="IPR049437">
    <property type="entry name" value="tRNA-synt_1c_C2"/>
</dbReference>
<dbReference type="NCBIfam" id="TIGR00440">
    <property type="entry name" value="glnS"/>
    <property type="match status" value="1"/>
</dbReference>
<dbReference type="NCBIfam" id="NF011291">
    <property type="entry name" value="PRK14703.1"/>
    <property type="match status" value="1"/>
</dbReference>
<dbReference type="PANTHER" id="PTHR43097:SF5">
    <property type="entry name" value="GLUTAMATE--TRNA LIGASE"/>
    <property type="match status" value="1"/>
</dbReference>
<dbReference type="PANTHER" id="PTHR43097">
    <property type="entry name" value="GLUTAMINE-TRNA LIGASE"/>
    <property type="match status" value="1"/>
</dbReference>
<dbReference type="Pfam" id="PF00749">
    <property type="entry name" value="tRNA-synt_1c"/>
    <property type="match status" value="1"/>
</dbReference>
<dbReference type="Pfam" id="PF03950">
    <property type="entry name" value="tRNA-synt_1c_C"/>
    <property type="match status" value="1"/>
</dbReference>
<dbReference type="Pfam" id="PF20974">
    <property type="entry name" value="tRNA-synt_1c_C2"/>
    <property type="match status" value="1"/>
</dbReference>
<dbReference type="PRINTS" id="PR00987">
    <property type="entry name" value="TRNASYNTHGLU"/>
</dbReference>
<dbReference type="SUPFAM" id="SSF52374">
    <property type="entry name" value="Nucleotidylyl transferase"/>
    <property type="match status" value="1"/>
</dbReference>
<dbReference type="SUPFAM" id="SSF50715">
    <property type="entry name" value="Ribosomal protein L25-like"/>
    <property type="match status" value="1"/>
</dbReference>
<dbReference type="PROSITE" id="PS00178">
    <property type="entry name" value="AA_TRNA_LIGASE_I"/>
    <property type="match status" value="1"/>
</dbReference>
<keyword id="KW-0030">Aminoacyl-tRNA synthetase</keyword>
<keyword id="KW-0067">ATP-binding</keyword>
<keyword id="KW-0963">Cytoplasm</keyword>
<keyword id="KW-0436">Ligase</keyword>
<keyword id="KW-0547">Nucleotide-binding</keyword>
<keyword id="KW-0648">Protein biosynthesis</keyword>
<organism>
    <name type="scientific">Pseudomonas aeruginosa (strain UCBPP-PA14)</name>
    <dbReference type="NCBI Taxonomy" id="208963"/>
    <lineage>
        <taxon>Bacteria</taxon>
        <taxon>Pseudomonadati</taxon>
        <taxon>Pseudomonadota</taxon>
        <taxon>Gammaproteobacteria</taxon>
        <taxon>Pseudomonadales</taxon>
        <taxon>Pseudomonadaceae</taxon>
        <taxon>Pseudomonas</taxon>
    </lineage>
</organism>